<protein>
    <recommendedName>
        <fullName>Alpha-farnesene synthase</fullName>
        <shortName>CmTpsDul</shortName>
        <ecNumber>4.2.3.46</ecNumber>
    </recommendedName>
</protein>
<sequence length="560" mass="65190">MSSNISAIPNSLEVIRRSAQFQASVWGDYFLSYHSLSPEKGNKVMEKQTEELKEEIKRELNSTTKDEEPEKLRLIDSIQRLGVCYHFEYEINKILEQLHHITITSKNNGDDHPYNMTLRFRLLRQQGYNISSKSFERFRGKWESSYDKNVEELLSLYEASQLRMRGEEALDEAFRFATAQLEAIVQDPTTDPTVVGEVCQALKWPMYKNLPRLQASHYIGLYSEKPWRNESLPNFAKMDFSKLQKLHQKEIAYISKWWDDYGFAEKLSFARNRIVEGYFFALGIFFEPQLSTARLIMTKIIAIGSVLDDIYDVYGTFEELKLLTLALERWDKSETKKLPKYMKMYYEALLDVFEEIEQEMSQKETTPYCIHQMKEATKELGRVFLVEAKWCKEGYTPTVEEYLDIALISFGHKLLMVTALLGMGSTIATQQIVQWITSMPNILKASAIICRLMNDIVSHKFEQERGHVASAIECYMEQNYMSEHDVLIILGKQIDEFWKDMVENYCVVITEEEVPRGVLMRVLNLTRLFNVIYKDGDGYTQSHGSTKTHIKSLLVDSLPL</sequence>
<keyword id="KW-0963">Cytoplasm</keyword>
<keyword id="KW-0456">Lyase</keyword>
<keyword id="KW-0460">Magnesium</keyword>
<keyword id="KW-0479">Metal-binding</keyword>
<keyword id="KW-1185">Reference proteome</keyword>
<feature type="chain" id="PRO_0000419799" description="Alpha-farnesene synthase">
    <location>
        <begin position="1"/>
        <end position="560"/>
    </location>
</feature>
<feature type="short sequence motif" description="DDXXD motif">
    <location>
        <begin position="308"/>
        <end position="312"/>
    </location>
</feature>
<feature type="binding site" evidence="1">
    <location>
        <position position="308"/>
    </location>
    <ligand>
        <name>Mg(2+)</name>
        <dbReference type="ChEBI" id="CHEBI:18420"/>
        <label>1</label>
    </ligand>
</feature>
<feature type="binding site" evidence="1">
    <location>
        <position position="308"/>
    </location>
    <ligand>
        <name>Mg(2+)</name>
        <dbReference type="ChEBI" id="CHEBI:18420"/>
        <label>2</label>
    </ligand>
</feature>
<feature type="binding site" evidence="1">
    <location>
        <position position="312"/>
    </location>
    <ligand>
        <name>Mg(2+)</name>
        <dbReference type="ChEBI" id="CHEBI:18420"/>
        <label>1</label>
    </ligand>
</feature>
<feature type="binding site" evidence="1">
    <location>
        <position position="312"/>
    </location>
    <ligand>
        <name>Mg(2+)</name>
        <dbReference type="ChEBI" id="CHEBI:18420"/>
        <label>2</label>
    </ligand>
</feature>
<feature type="binding site" evidence="1">
    <location>
        <position position="462"/>
    </location>
    <ligand>
        <name>Mg(2+)</name>
        <dbReference type="ChEBI" id="CHEBI:18420"/>
        <label>3</label>
    </ligand>
</feature>
<comment type="function">
    <text evidence="2">Sesquiterpene synthase producing exclusively alpha-farnesene. Associated with the production of sesquiterpenes responsible for the aroma of the fruit.</text>
</comment>
<comment type="catalytic activity">
    <reaction evidence="2">
        <text>(2E,6E)-farnesyl diphosphate = (3E,6E)-alpha-farnesene + diphosphate</text>
        <dbReference type="Rhea" id="RHEA:27421"/>
        <dbReference type="ChEBI" id="CHEBI:10280"/>
        <dbReference type="ChEBI" id="CHEBI:33019"/>
        <dbReference type="ChEBI" id="CHEBI:175763"/>
        <dbReference type="EC" id="4.2.3.46"/>
    </reaction>
</comment>
<comment type="cofactor">
    <cofactor evidence="1">
        <name>Mg(2+)</name>
        <dbReference type="ChEBI" id="CHEBI:18420"/>
    </cofactor>
    <text evidence="1">Binds 3 Mg(2+) ions per subunit.</text>
</comment>
<comment type="pathway">
    <text>Secondary metabolite biosynthesis; terpenoid biosynthesis.</text>
</comment>
<comment type="subcellular location">
    <subcellularLocation>
        <location evidence="3">Cytoplasm</location>
    </subcellularLocation>
</comment>
<comment type="tissue specificity">
    <text evidence="2">Expressed in the rind tissues of ripe fruits.</text>
</comment>
<comment type="developmental stage">
    <text evidence="2">Expressed during ripening.</text>
</comment>
<comment type="domain">
    <text evidence="1">The Asp-Asp-Xaa-Xaa-Asp/Glu (DDXXD/E) motif is important for the catalytic activity, presumably through binding to Mg(2+).</text>
</comment>
<comment type="similarity">
    <text evidence="3">Belongs to the terpene synthase family. Tpsa subfamily.</text>
</comment>
<evidence type="ECO:0000250" key="1"/>
<evidence type="ECO:0000269" key="2">
    <source>
    </source>
</evidence>
<evidence type="ECO:0000305" key="3"/>
<accession>B2KSJ6</accession>
<reference key="1">
    <citation type="journal article" date="2008" name="Plant Mol. Biol.">
        <title>The molecular and biochemical basis for varietal variation in sesquiterpene content in melon (Cucumis melo L.) rinds.</title>
        <authorList>
            <person name="Portnoy V."/>
            <person name="Benyamini Y."/>
            <person name="Bar E."/>
            <person name="Harel-Beja R."/>
            <person name="Gepstein S."/>
            <person name="Giovannoni J.J."/>
            <person name="Schaffer A.A."/>
            <person name="Burger J."/>
            <person name="Tadmor Y."/>
            <person name="Lewinsohn E."/>
            <person name="Katzir N."/>
        </authorList>
    </citation>
    <scope>NUCLEOTIDE SEQUENCE [MRNA]</scope>
    <scope>FUNCTION</scope>
    <scope>CATALYTIC ACTIVITY</scope>
    <scope>TISSUE SPECIFICITY</scope>
    <scope>DEVELOPMENTAL STAGE</scope>
    <source>
        <strain>cv. Dulce</strain>
    </source>
</reference>
<name>AFSY1_CUCME</name>
<organism>
    <name type="scientific">Cucumis melo</name>
    <name type="common">Muskmelon</name>
    <dbReference type="NCBI Taxonomy" id="3656"/>
    <lineage>
        <taxon>Eukaryota</taxon>
        <taxon>Viridiplantae</taxon>
        <taxon>Streptophyta</taxon>
        <taxon>Embryophyta</taxon>
        <taxon>Tracheophyta</taxon>
        <taxon>Spermatophyta</taxon>
        <taxon>Magnoliopsida</taxon>
        <taxon>eudicotyledons</taxon>
        <taxon>Gunneridae</taxon>
        <taxon>Pentapetalae</taxon>
        <taxon>rosids</taxon>
        <taxon>fabids</taxon>
        <taxon>Cucurbitales</taxon>
        <taxon>Cucurbitaceae</taxon>
        <taxon>Benincaseae</taxon>
        <taxon>Cucumis</taxon>
    </lineage>
</organism>
<proteinExistence type="evidence at protein level"/>
<dbReference type="EC" id="4.2.3.46"/>
<dbReference type="EMBL" id="EU158099">
    <property type="protein sequence ID" value="ABX83201.1"/>
    <property type="molecule type" value="mRNA"/>
</dbReference>
<dbReference type="RefSeq" id="NP_001284384.1">
    <property type="nucleotide sequence ID" value="NM_001297455.1"/>
</dbReference>
<dbReference type="SMR" id="B2KSJ6"/>
<dbReference type="FunCoup" id="B2KSJ6">
    <property type="interactions" value="18"/>
</dbReference>
<dbReference type="GeneID" id="103493391"/>
<dbReference type="KEGG" id="cmo:103493391"/>
<dbReference type="eggNOG" id="ENOG502QUCN">
    <property type="taxonomic scope" value="Eukaryota"/>
</dbReference>
<dbReference type="InParanoid" id="B2KSJ6"/>
<dbReference type="UniPathway" id="UPA00213"/>
<dbReference type="Proteomes" id="UP000089565">
    <property type="component" value="Unplaced"/>
</dbReference>
<dbReference type="Proteomes" id="UP000596662">
    <property type="component" value="Unplaced"/>
</dbReference>
<dbReference type="GO" id="GO:0005737">
    <property type="term" value="C:cytoplasm"/>
    <property type="evidence" value="ECO:0007669"/>
    <property type="project" value="UniProtKB-SubCell"/>
</dbReference>
<dbReference type="GO" id="GO:0052578">
    <property type="term" value="F:alpha-farnesene synthase activity"/>
    <property type="evidence" value="ECO:0007669"/>
    <property type="project" value="RHEA"/>
</dbReference>
<dbReference type="GO" id="GO:0000287">
    <property type="term" value="F:magnesium ion binding"/>
    <property type="evidence" value="ECO:0007669"/>
    <property type="project" value="InterPro"/>
</dbReference>
<dbReference type="GO" id="GO:0010334">
    <property type="term" value="F:sesquiterpene synthase activity"/>
    <property type="evidence" value="ECO:0000314"/>
    <property type="project" value="UniProtKB"/>
</dbReference>
<dbReference type="GO" id="GO:0016102">
    <property type="term" value="P:diterpenoid biosynthetic process"/>
    <property type="evidence" value="ECO:0007669"/>
    <property type="project" value="InterPro"/>
</dbReference>
<dbReference type="GO" id="GO:0045338">
    <property type="term" value="P:farnesyl diphosphate metabolic process"/>
    <property type="evidence" value="ECO:0000314"/>
    <property type="project" value="UniProtKB"/>
</dbReference>
<dbReference type="GO" id="GO:0051762">
    <property type="term" value="P:sesquiterpene biosynthetic process"/>
    <property type="evidence" value="ECO:0000314"/>
    <property type="project" value="UniProtKB"/>
</dbReference>
<dbReference type="CDD" id="cd00684">
    <property type="entry name" value="Terpene_cyclase_plant_C1"/>
    <property type="match status" value="1"/>
</dbReference>
<dbReference type="FunFam" id="1.10.600.10:FF:000007">
    <property type="entry name" value="Isoprene synthase, chloroplastic"/>
    <property type="match status" value="1"/>
</dbReference>
<dbReference type="Gene3D" id="1.10.600.10">
    <property type="entry name" value="Farnesyl Diphosphate Synthase"/>
    <property type="match status" value="1"/>
</dbReference>
<dbReference type="Gene3D" id="1.50.10.130">
    <property type="entry name" value="Terpene synthase, N-terminal domain"/>
    <property type="match status" value="1"/>
</dbReference>
<dbReference type="InterPro" id="IPR008949">
    <property type="entry name" value="Isoprenoid_synthase_dom_sf"/>
</dbReference>
<dbReference type="InterPro" id="IPR034741">
    <property type="entry name" value="Terpene_cyclase-like_1_C"/>
</dbReference>
<dbReference type="InterPro" id="IPR044814">
    <property type="entry name" value="Terpene_cyclase_plant_C1"/>
</dbReference>
<dbReference type="InterPro" id="IPR001906">
    <property type="entry name" value="Terpene_synth_N"/>
</dbReference>
<dbReference type="InterPro" id="IPR036965">
    <property type="entry name" value="Terpene_synth_N_sf"/>
</dbReference>
<dbReference type="InterPro" id="IPR050148">
    <property type="entry name" value="Terpene_synthase-like"/>
</dbReference>
<dbReference type="InterPro" id="IPR005630">
    <property type="entry name" value="Terpene_synthase_metal-bd"/>
</dbReference>
<dbReference type="InterPro" id="IPR008930">
    <property type="entry name" value="Terpenoid_cyclase/PrenylTrfase"/>
</dbReference>
<dbReference type="PANTHER" id="PTHR31225:SF221">
    <property type="entry name" value="(-)-GERMACRENE D SYNTHASE"/>
    <property type="match status" value="1"/>
</dbReference>
<dbReference type="PANTHER" id="PTHR31225">
    <property type="entry name" value="OS04G0344100 PROTEIN-RELATED"/>
    <property type="match status" value="1"/>
</dbReference>
<dbReference type="Pfam" id="PF01397">
    <property type="entry name" value="Terpene_synth"/>
    <property type="match status" value="1"/>
</dbReference>
<dbReference type="Pfam" id="PF03936">
    <property type="entry name" value="Terpene_synth_C"/>
    <property type="match status" value="1"/>
</dbReference>
<dbReference type="SFLD" id="SFLDS00005">
    <property type="entry name" value="Isoprenoid_Synthase_Type_I"/>
    <property type="match status" value="1"/>
</dbReference>
<dbReference type="SFLD" id="SFLDG01019">
    <property type="entry name" value="Terpene_Cyclase_Like_1_C_Termi"/>
    <property type="match status" value="1"/>
</dbReference>
<dbReference type="SUPFAM" id="SSF48239">
    <property type="entry name" value="Terpenoid cyclases/Protein prenyltransferases"/>
    <property type="match status" value="1"/>
</dbReference>
<dbReference type="SUPFAM" id="SSF48576">
    <property type="entry name" value="Terpenoid synthases"/>
    <property type="match status" value="1"/>
</dbReference>